<protein>
    <recommendedName>
        <fullName evidence="1">Thymidylate kinase</fullName>
        <ecNumber evidence="1">2.7.4.9</ecNumber>
    </recommendedName>
    <alternativeName>
        <fullName evidence="1">dTMP kinase</fullName>
    </alternativeName>
</protein>
<keyword id="KW-0067">ATP-binding</keyword>
<keyword id="KW-0418">Kinase</keyword>
<keyword id="KW-0545">Nucleotide biosynthesis</keyword>
<keyword id="KW-0547">Nucleotide-binding</keyword>
<keyword id="KW-1185">Reference proteome</keyword>
<keyword id="KW-0808">Transferase</keyword>
<name>KTHY_CERS4</name>
<gene>
    <name evidence="1" type="primary">tmk</name>
    <name type="ordered locus">RHOS4_21550</name>
    <name type="ORF">RSP_0551</name>
</gene>
<accession>Q3J0G1</accession>
<organism>
    <name type="scientific">Cereibacter sphaeroides (strain ATCC 17023 / DSM 158 / JCM 6121 / CCUG 31486 / LMG 2827 / NBRC 12203 / NCIMB 8253 / ATH 2.4.1.)</name>
    <name type="common">Rhodobacter sphaeroides</name>
    <dbReference type="NCBI Taxonomy" id="272943"/>
    <lineage>
        <taxon>Bacteria</taxon>
        <taxon>Pseudomonadati</taxon>
        <taxon>Pseudomonadota</taxon>
        <taxon>Alphaproteobacteria</taxon>
        <taxon>Rhodobacterales</taxon>
        <taxon>Paracoccaceae</taxon>
        <taxon>Cereibacter</taxon>
    </lineage>
</organism>
<proteinExistence type="inferred from homology"/>
<feature type="chain" id="PRO_1000023267" description="Thymidylate kinase">
    <location>
        <begin position="1"/>
        <end position="217"/>
    </location>
</feature>
<feature type="binding site" evidence="1">
    <location>
        <begin position="12"/>
        <end position="19"/>
    </location>
    <ligand>
        <name>ATP</name>
        <dbReference type="ChEBI" id="CHEBI:30616"/>
    </ligand>
</feature>
<evidence type="ECO:0000255" key="1">
    <source>
        <dbReference type="HAMAP-Rule" id="MF_00165"/>
    </source>
</evidence>
<dbReference type="EC" id="2.7.4.9" evidence="1"/>
<dbReference type="EMBL" id="CP000143">
    <property type="protein sequence ID" value="ABA79723.1"/>
    <property type="molecule type" value="Genomic_DNA"/>
</dbReference>
<dbReference type="RefSeq" id="WP_002720716.1">
    <property type="nucleotide sequence ID" value="NZ_CP030271.1"/>
</dbReference>
<dbReference type="RefSeq" id="YP_353624.1">
    <property type="nucleotide sequence ID" value="NC_007493.2"/>
</dbReference>
<dbReference type="SMR" id="Q3J0G1"/>
<dbReference type="STRING" id="272943.RSP_0551"/>
<dbReference type="EnsemblBacteria" id="ABA79723">
    <property type="protein sequence ID" value="ABA79723"/>
    <property type="gene ID" value="RSP_0551"/>
</dbReference>
<dbReference type="GeneID" id="3717943"/>
<dbReference type="KEGG" id="rsp:RSP_0551"/>
<dbReference type="PATRIC" id="fig|272943.9.peg.2501"/>
<dbReference type="eggNOG" id="COG0125">
    <property type="taxonomic scope" value="Bacteria"/>
</dbReference>
<dbReference type="OrthoDB" id="9774907at2"/>
<dbReference type="PhylomeDB" id="Q3J0G1"/>
<dbReference type="Proteomes" id="UP000002703">
    <property type="component" value="Chromosome 1"/>
</dbReference>
<dbReference type="GO" id="GO:0005829">
    <property type="term" value="C:cytosol"/>
    <property type="evidence" value="ECO:0007669"/>
    <property type="project" value="TreeGrafter"/>
</dbReference>
<dbReference type="GO" id="GO:0005524">
    <property type="term" value="F:ATP binding"/>
    <property type="evidence" value="ECO:0007669"/>
    <property type="project" value="UniProtKB-UniRule"/>
</dbReference>
<dbReference type="GO" id="GO:0004798">
    <property type="term" value="F:dTMP kinase activity"/>
    <property type="evidence" value="ECO:0007669"/>
    <property type="project" value="UniProtKB-UniRule"/>
</dbReference>
<dbReference type="GO" id="GO:0006233">
    <property type="term" value="P:dTDP biosynthetic process"/>
    <property type="evidence" value="ECO:0007669"/>
    <property type="project" value="InterPro"/>
</dbReference>
<dbReference type="GO" id="GO:0006235">
    <property type="term" value="P:dTTP biosynthetic process"/>
    <property type="evidence" value="ECO:0007669"/>
    <property type="project" value="UniProtKB-UniRule"/>
</dbReference>
<dbReference type="GO" id="GO:0006227">
    <property type="term" value="P:dUDP biosynthetic process"/>
    <property type="evidence" value="ECO:0007669"/>
    <property type="project" value="TreeGrafter"/>
</dbReference>
<dbReference type="CDD" id="cd01672">
    <property type="entry name" value="TMPK"/>
    <property type="match status" value="1"/>
</dbReference>
<dbReference type="FunFam" id="3.40.50.300:FF:000225">
    <property type="entry name" value="Thymidylate kinase"/>
    <property type="match status" value="1"/>
</dbReference>
<dbReference type="Gene3D" id="3.40.50.300">
    <property type="entry name" value="P-loop containing nucleotide triphosphate hydrolases"/>
    <property type="match status" value="1"/>
</dbReference>
<dbReference type="HAMAP" id="MF_00165">
    <property type="entry name" value="Thymidylate_kinase"/>
    <property type="match status" value="1"/>
</dbReference>
<dbReference type="InterPro" id="IPR027417">
    <property type="entry name" value="P-loop_NTPase"/>
</dbReference>
<dbReference type="InterPro" id="IPR039430">
    <property type="entry name" value="Thymidylate_kin-like_dom"/>
</dbReference>
<dbReference type="InterPro" id="IPR018095">
    <property type="entry name" value="Thymidylate_kin_CS"/>
</dbReference>
<dbReference type="InterPro" id="IPR018094">
    <property type="entry name" value="Thymidylate_kinase"/>
</dbReference>
<dbReference type="NCBIfam" id="TIGR00041">
    <property type="entry name" value="DTMP_kinase"/>
    <property type="match status" value="1"/>
</dbReference>
<dbReference type="PANTHER" id="PTHR10344">
    <property type="entry name" value="THYMIDYLATE KINASE"/>
    <property type="match status" value="1"/>
</dbReference>
<dbReference type="PANTHER" id="PTHR10344:SF4">
    <property type="entry name" value="UMP-CMP KINASE 2, MITOCHONDRIAL"/>
    <property type="match status" value="1"/>
</dbReference>
<dbReference type="Pfam" id="PF02223">
    <property type="entry name" value="Thymidylate_kin"/>
    <property type="match status" value="1"/>
</dbReference>
<dbReference type="SUPFAM" id="SSF52540">
    <property type="entry name" value="P-loop containing nucleoside triphosphate hydrolases"/>
    <property type="match status" value="1"/>
</dbReference>
<dbReference type="PROSITE" id="PS01331">
    <property type="entry name" value="THYMIDYLATE_KINASE"/>
    <property type="match status" value="1"/>
</dbReference>
<reference key="1">
    <citation type="submission" date="2005-09" db="EMBL/GenBank/DDBJ databases">
        <title>Complete sequence of chromosome 1 of Rhodobacter sphaeroides 2.4.1.</title>
        <authorList>
            <person name="Copeland A."/>
            <person name="Lucas S."/>
            <person name="Lapidus A."/>
            <person name="Barry K."/>
            <person name="Detter J.C."/>
            <person name="Glavina T."/>
            <person name="Hammon N."/>
            <person name="Israni S."/>
            <person name="Pitluck S."/>
            <person name="Richardson P."/>
            <person name="Mackenzie C."/>
            <person name="Choudhary M."/>
            <person name="Larimer F."/>
            <person name="Hauser L.J."/>
            <person name="Land M."/>
            <person name="Donohue T.J."/>
            <person name="Kaplan S."/>
        </authorList>
    </citation>
    <scope>NUCLEOTIDE SEQUENCE [LARGE SCALE GENOMIC DNA]</scope>
    <source>
        <strain>ATCC 17023 / DSM 158 / JCM 6121 / CCUG 31486 / LMG 2827 / NBRC 12203 / NCIMB 8253 / ATH 2.4.1.</strain>
    </source>
</reference>
<comment type="function">
    <text evidence="1">Phosphorylation of dTMP to form dTDP in both de novo and salvage pathways of dTTP synthesis.</text>
</comment>
<comment type="catalytic activity">
    <reaction evidence="1">
        <text>dTMP + ATP = dTDP + ADP</text>
        <dbReference type="Rhea" id="RHEA:13517"/>
        <dbReference type="ChEBI" id="CHEBI:30616"/>
        <dbReference type="ChEBI" id="CHEBI:58369"/>
        <dbReference type="ChEBI" id="CHEBI:63528"/>
        <dbReference type="ChEBI" id="CHEBI:456216"/>
        <dbReference type="EC" id="2.7.4.9"/>
    </reaction>
</comment>
<comment type="similarity">
    <text evidence="1">Belongs to the thymidylate kinase family.</text>
</comment>
<sequence>MGAQGFFLAVEGIDGSGKSGIVRSLAAHLGAEGRDVLVTREPGGTPEGEAIRGLVLAGADEAWDPMAELLLMTAARVQHVRRVIAPALAQGRVVISDRYAGSTLAYQGTGRGLSEAFIRTLHAEATGDLWPDLTLVLDLEAGIGLARSRRRLTGETLDEGRFESLDLAFHERIRAAFLAQAARDPGRHAVIDASGTPEEVQARACAALAPFLAQAPV</sequence>